<comment type="function">
    <text evidence="1">Catalyzes the oxidation of 5,10-methylenetetrahydrofolate to 5,10-methenyltetrahydrofolate and then the hydrolysis of 5,10-methenyltetrahydrofolate to 10-formyltetrahydrofolate.</text>
</comment>
<comment type="catalytic activity">
    <reaction evidence="1">
        <text>(6R)-5,10-methylene-5,6,7,8-tetrahydrofolate + NADP(+) = (6R)-5,10-methenyltetrahydrofolate + NADPH</text>
        <dbReference type="Rhea" id="RHEA:22812"/>
        <dbReference type="ChEBI" id="CHEBI:15636"/>
        <dbReference type="ChEBI" id="CHEBI:57455"/>
        <dbReference type="ChEBI" id="CHEBI:57783"/>
        <dbReference type="ChEBI" id="CHEBI:58349"/>
        <dbReference type="EC" id="1.5.1.5"/>
    </reaction>
</comment>
<comment type="catalytic activity">
    <reaction evidence="1">
        <text>(6R)-5,10-methenyltetrahydrofolate + H2O = (6R)-10-formyltetrahydrofolate + H(+)</text>
        <dbReference type="Rhea" id="RHEA:23700"/>
        <dbReference type="ChEBI" id="CHEBI:15377"/>
        <dbReference type="ChEBI" id="CHEBI:15378"/>
        <dbReference type="ChEBI" id="CHEBI:57455"/>
        <dbReference type="ChEBI" id="CHEBI:195366"/>
        <dbReference type="EC" id="3.5.4.9"/>
    </reaction>
</comment>
<comment type="pathway">
    <text evidence="1">One-carbon metabolism; tetrahydrofolate interconversion.</text>
</comment>
<comment type="subunit">
    <text evidence="1">Homodimer.</text>
</comment>
<comment type="similarity">
    <text evidence="1">Belongs to the tetrahydrofolate dehydrogenase/cyclohydrolase family.</text>
</comment>
<comment type="sequence caution" evidence="2">
    <conflict type="erroneous termination">
        <sequence resource="EMBL-CDS" id="AAU38458"/>
    </conflict>
    <text>Truncated C-terminus.</text>
</comment>
<comment type="sequence caution" evidence="2">
    <conflict type="erroneous termination">
        <sequence resource="EMBL-CDS" id="AAU38459"/>
    </conflict>
    <text>Truncated C-terminus.</text>
</comment>
<evidence type="ECO:0000255" key="1">
    <source>
        <dbReference type="HAMAP-Rule" id="MF_01576"/>
    </source>
</evidence>
<evidence type="ECO:0000305" key="2"/>
<feature type="chain" id="PRO_0000268392" description="Bifunctional protein FolD">
    <location>
        <begin position="1"/>
        <end position="283"/>
    </location>
</feature>
<feature type="binding site" evidence="1">
    <location>
        <begin position="166"/>
        <end position="168"/>
    </location>
    <ligand>
        <name>NADP(+)</name>
        <dbReference type="ChEBI" id="CHEBI:58349"/>
    </ligand>
</feature>
<feature type="binding site" evidence="1">
    <location>
        <position position="232"/>
    </location>
    <ligand>
        <name>NADP(+)</name>
        <dbReference type="ChEBI" id="CHEBI:58349"/>
    </ligand>
</feature>
<sequence length="283" mass="30226">MTAQVISGSALAKKVKTEVGQKIEQYVAQGKRAPGLAVILVGADPASQVYVGSKRKSCAEIGINSKSYDLEESTSEAALLTLIDELNNDADIDGILVQLPLPKHIDSTKVIERIAPHKDVDGFHPYNVGRLCQRIPTLRACTPYGIMKLLETTELNLKGRHAVIVGASNIVGRPMAMELLLAGCTVTVTHRFTTNLEGYVRQADILVVAVGKAEFIPGNWVKEGAVVIDVGINRCEDGKLRGDVEFAAAAEKAGFITPVPGGVGPMTVAMLMFNTLTAYENNG</sequence>
<organism>
    <name type="scientific">Mannheimia succiniciproducens (strain KCTC 0769BP / MBEL55E)</name>
    <dbReference type="NCBI Taxonomy" id="221988"/>
    <lineage>
        <taxon>Bacteria</taxon>
        <taxon>Pseudomonadati</taxon>
        <taxon>Pseudomonadota</taxon>
        <taxon>Gammaproteobacteria</taxon>
        <taxon>Pasteurellales</taxon>
        <taxon>Pasteurellaceae</taxon>
        <taxon>Basfia</taxon>
    </lineage>
</organism>
<protein>
    <recommendedName>
        <fullName evidence="1">Bifunctional protein FolD</fullName>
    </recommendedName>
    <domain>
        <recommendedName>
            <fullName evidence="1">Methylenetetrahydrofolate dehydrogenase</fullName>
            <ecNumber evidence="1">1.5.1.5</ecNumber>
        </recommendedName>
    </domain>
    <domain>
        <recommendedName>
            <fullName evidence="1">Methenyltetrahydrofolate cyclohydrolase</fullName>
            <ecNumber evidence="1">3.5.4.9</ecNumber>
        </recommendedName>
    </domain>
</protein>
<proteinExistence type="inferred from homology"/>
<name>FOLD_MANSM</name>
<keyword id="KW-0028">Amino-acid biosynthesis</keyword>
<keyword id="KW-0368">Histidine biosynthesis</keyword>
<keyword id="KW-0378">Hydrolase</keyword>
<keyword id="KW-0486">Methionine biosynthesis</keyword>
<keyword id="KW-0511">Multifunctional enzyme</keyword>
<keyword id="KW-0521">NADP</keyword>
<keyword id="KW-0554">One-carbon metabolism</keyword>
<keyword id="KW-0560">Oxidoreductase</keyword>
<keyword id="KW-0658">Purine biosynthesis</keyword>
<dbReference type="EC" id="1.5.1.5" evidence="1"/>
<dbReference type="EC" id="3.5.4.9" evidence="1"/>
<dbReference type="EMBL" id="AE016827">
    <property type="protein sequence ID" value="AAU38458.1"/>
    <property type="status" value="ALT_SEQ"/>
    <property type="molecule type" value="Genomic_DNA"/>
</dbReference>
<dbReference type="EMBL" id="AE016827">
    <property type="protein sequence ID" value="AAU38459.1"/>
    <property type="status" value="ALT_SEQ"/>
    <property type="molecule type" value="Genomic_DNA"/>
</dbReference>
<dbReference type="SMR" id="Q65RF1"/>
<dbReference type="STRING" id="221988.MS1852"/>
<dbReference type="KEGG" id="msu:MS1851"/>
<dbReference type="KEGG" id="msu:MS1852"/>
<dbReference type="eggNOG" id="COG0190">
    <property type="taxonomic scope" value="Bacteria"/>
</dbReference>
<dbReference type="HOGENOM" id="CLU_034045_4_1_6"/>
<dbReference type="UniPathway" id="UPA00193"/>
<dbReference type="Proteomes" id="UP000000607">
    <property type="component" value="Chromosome"/>
</dbReference>
<dbReference type="GO" id="GO:0005829">
    <property type="term" value="C:cytosol"/>
    <property type="evidence" value="ECO:0007669"/>
    <property type="project" value="TreeGrafter"/>
</dbReference>
<dbReference type="GO" id="GO:0004477">
    <property type="term" value="F:methenyltetrahydrofolate cyclohydrolase activity"/>
    <property type="evidence" value="ECO:0007669"/>
    <property type="project" value="UniProtKB-UniRule"/>
</dbReference>
<dbReference type="GO" id="GO:0004488">
    <property type="term" value="F:methylenetetrahydrofolate dehydrogenase (NADP+) activity"/>
    <property type="evidence" value="ECO:0007669"/>
    <property type="project" value="UniProtKB-UniRule"/>
</dbReference>
<dbReference type="GO" id="GO:0000105">
    <property type="term" value="P:L-histidine biosynthetic process"/>
    <property type="evidence" value="ECO:0007669"/>
    <property type="project" value="UniProtKB-KW"/>
</dbReference>
<dbReference type="GO" id="GO:0009086">
    <property type="term" value="P:methionine biosynthetic process"/>
    <property type="evidence" value="ECO:0007669"/>
    <property type="project" value="UniProtKB-KW"/>
</dbReference>
<dbReference type="GO" id="GO:0006164">
    <property type="term" value="P:purine nucleotide biosynthetic process"/>
    <property type="evidence" value="ECO:0007669"/>
    <property type="project" value="UniProtKB-KW"/>
</dbReference>
<dbReference type="GO" id="GO:0035999">
    <property type="term" value="P:tetrahydrofolate interconversion"/>
    <property type="evidence" value="ECO:0007669"/>
    <property type="project" value="UniProtKB-UniRule"/>
</dbReference>
<dbReference type="CDD" id="cd01080">
    <property type="entry name" value="NAD_bind_m-THF_DH_Cyclohyd"/>
    <property type="match status" value="1"/>
</dbReference>
<dbReference type="FunFam" id="3.40.50.10860:FF:000001">
    <property type="entry name" value="Bifunctional protein FolD"/>
    <property type="match status" value="1"/>
</dbReference>
<dbReference type="FunFam" id="3.40.50.720:FF:000006">
    <property type="entry name" value="Bifunctional protein FolD"/>
    <property type="match status" value="1"/>
</dbReference>
<dbReference type="Gene3D" id="3.40.50.10860">
    <property type="entry name" value="Leucine Dehydrogenase, chain A, domain 1"/>
    <property type="match status" value="1"/>
</dbReference>
<dbReference type="Gene3D" id="3.40.50.720">
    <property type="entry name" value="NAD(P)-binding Rossmann-like Domain"/>
    <property type="match status" value="1"/>
</dbReference>
<dbReference type="HAMAP" id="MF_01576">
    <property type="entry name" value="THF_DHG_CYH"/>
    <property type="match status" value="1"/>
</dbReference>
<dbReference type="InterPro" id="IPR046346">
    <property type="entry name" value="Aminoacid_DH-like_N_sf"/>
</dbReference>
<dbReference type="InterPro" id="IPR036291">
    <property type="entry name" value="NAD(P)-bd_dom_sf"/>
</dbReference>
<dbReference type="InterPro" id="IPR000672">
    <property type="entry name" value="THF_DH/CycHdrlase"/>
</dbReference>
<dbReference type="InterPro" id="IPR020630">
    <property type="entry name" value="THF_DH/CycHdrlase_cat_dom"/>
</dbReference>
<dbReference type="InterPro" id="IPR020867">
    <property type="entry name" value="THF_DH/CycHdrlase_CS"/>
</dbReference>
<dbReference type="InterPro" id="IPR020631">
    <property type="entry name" value="THF_DH/CycHdrlase_NAD-bd_dom"/>
</dbReference>
<dbReference type="NCBIfam" id="NF008058">
    <property type="entry name" value="PRK10792.1"/>
    <property type="match status" value="1"/>
</dbReference>
<dbReference type="NCBIfam" id="NF010783">
    <property type="entry name" value="PRK14186.1"/>
    <property type="match status" value="1"/>
</dbReference>
<dbReference type="PANTHER" id="PTHR48099:SF5">
    <property type="entry name" value="C-1-TETRAHYDROFOLATE SYNTHASE, CYTOPLASMIC"/>
    <property type="match status" value="1"/>
</dbReference>
<dbReference type="PANTHER" id="PTHR48099">
    <property type="entry name" value="C-1-TETRAHYDROFOLATE SYNTHASE, CYTOPLASMIC-RELATED"/>
    <property type="match status" value="1"/>
</dbReference>
<dbReference type="Pfam" id="PF00763">
    <property type="entry name" value="THF_DHG_CYH"/>
    <property type="match status" value="1"/>
</dbReference>
<dbReference type="Pfam" id="PF02882">
    <property type="entry name" value="THF_DHG_CYH_C"/>
    <property type="match status" value="1"/>
</dbReference>
<dbReference type="PRINTS" id="PR00085">
    <property type="entry name" value="THFDHDRGNASE"/>
</dbReference>
<dbReference type="SUPFAM" id="SSF53223">
    <property type="entry name" value="Aminoacid dehydrogenase-like, N-terminal domain"/>
    <property type="match status" value="1"/>
</dbReference>
<dbReference type="SUPFAM" id="SSF51735">
    <property type="entry name" value="NAD(P)-binding Rossmann-fold domains"/>
    <property type="match status" value="1"/>
</dbReference>
<dbReference type="PROSITE" id="PS00767">
    <property type="entry name" value="THF_DHG_CYH_2"/>
    <property type="match status" value="1"/>
</dbReference>
<accession>Q65RF1</accession>
<accession>Q65RF2</accession>
<reference key="1">
    <citation type="journal article" date="2004" name="Nat. Biotechnol.">
        <title>The genome sequence of the capnophilic rumen bacterium Mannheimia succiniciproducens.</title>
        <authorList>
            <person name="Hong S.H."/>
            <person name="Kim J.S."/>
            <person name="Lee S.Y."/>
            <person name="In Y.H."/>
            <person name="Choi S.S."/>
            <person name="Rih J.-K."/>
            <person name="Kim C.H."/>
            <person name="Jeong H."/>
            <person name="Hur C.G."/>
            <person name="Kim J.J."/>
        </authorList>
    </citation>
    <scope>NUCLEOTIDE SEQUENCE [LARGE SCALE GENOMIC DNA]</scope>
    <source>
        <strain>KCTC 0769BP / MBEL55E</strain>
    </source>
</reference>
<gene>
    <name evidence="1" type="primary">folD</name>
    <name type="ordered locus">MS1851/MS1852</name>
</gene>